<sequence>MPNITMGLKPDPVAPTNPTHHESNAAKEIRYRGVRKRPWGRYAAEIRDPVKKTRVWLGTFDTAQQAARAYDAAARDFRGVKAKTNFGVIVGSSPTQSSTVVDSPTAARFITPPHLELSLGGGGACRRKIPLVHPVYYYNMATYPKMTTCGVQSESETSSVVDFEGGAGKISPPLDLDLNLAPPAE</sequence>
<protein>
    <recommendedName>
        <fullName>Ethylene-responsive transcription factor 8</fullName>
        <shortName>AtERF8</shortName>
    </recommendedName>
    <alternativeName>
        <fullName>Ethylene-responsive element-binding factor 8</fullName>
        <shortName>EREBP-8</shortName>
    </alternativeName>
</protein>
<proteinExistence type="evidence at protein level"/>
<reference key="1">
    <citation type="journal article" date="2001" name="Plant Cell">
        <title>Repression domains of class II ERF transcriptional repressors share an essential motif for active repression.</title>
        <authorList>
            <person name="Ohta M."/>
            <person name="Matsui K."/>
            <person name="Hiratsu K."/>
            <person name="Shinshi H."/>
            <person name="Ohme-Takagi M."/>
        </authorList>
    </citation>
    <scope>NUCLEOTIDE SEQUENCE [MRNA]</scope>
    <scope>FUNCTION</scope>
    <scope>DOMAIN</scope>
</reference>
<reference key="2">
    <citation type="journal article" date="2000" name="Nature">
        <title>Sequence and analysis of chromosome 1 of the plant Arabidopsis thaliana.</title>
        <authorList>
            <person name="Theologis A."/>
            <person name="Ecker J.R."/>
            <person name="Palm C.J."/>
            <person name="Federspiel N.A."/>
            <person name="Kaul S."/>
            <person name="White O."/>
            <person name="Alonso J."/>
            <person name="Altafi H."/>
            <person name="Araujo R."/>
            <person name="Bowman C.L."/>
            <person name="Brooks S.Y."/>
            <person name="Buehler E."/>
            <person name="Chan A."/>
            <person name="Chao Q."/>
            <person name="Chen H."/>
            <person name="Cheuk R.F."/>
            <person name="Chin C.W."/>
            <person name="Chung M.K."/>
            <person name="Conn L."/>
            <person name="Conway A.B."/>
            <person name="Conway A.R."/>
            <person name="Creasy T.H."/>
            <person name="Dewar K."/>
            <person name="Dunn P."/>
            <person name="Etgu P."/>
            <person name="Feldblyum T.V."/>
            <person name="Feng J.-D."/>
            <person name="Fong B."/>
            <person name="Fujii C.Y."/>
            <person name="Gill J.E."/>
            <person name="Goldsmith A.D."/>
            <person name="Haas B."/>
            <person name="Hansen N.F."/>
            <person name="Hughes B."/>
            <person name="Huizar L."/>
            <person name="Hunter J.L."/>
            <person name="Jenkins J."/>
            <person name="Johnson-Hopson C."/>
            <person name="Khan S."/>
            <person name="Khaykin E."/>
            <person name="Kim C.J."/>
            <person name="Koo H.L."/>
            <person name="Kremenetskaia I."/>
            <person name="Kurtz D.B."/>
            <person name="Kwan A."/>
            <person name="Lam B."/>
            <person name="Langin-Hooper S."/>
            <person name="Lee A."/>
            <person name="Lee J.M."/>
            <person name="Lenz C.A."/>
            <person name="Li J.H."/>
            <person name="Li Y.-P."/>
            <person name="Lin X."/>
            <person name="Liu S.X."/>
            <person name="Liu Z.A."/>
            <person name="Luros J.S."/>
            <person name="Maiti R."/>
            <person name="Marziali A."/>
            <person name="Militscher J."/>
            <person name="Miranda M."/>
            <person name="Nguyen M."/>
            <person name="Nierman W.C."/>
            <person name="Osborne B.I."/>
            <person name="Pai G."/>
            <person name="Peterson J."/>
            <person name="Pham P.K."/>
            <person name="Rizzo M."/>
            <person name="Rooney T."/>
            <person name="Rowley D."/>
            <person name="Sakano H."/>
            <person name="Salzberg S.L."/>
            <person name="Schwartz J.R."/>
            <person name="Shinn P."/>
            <person name="Southwick A.M."/>
            <person name="Sun H."/>
            <person name="Tallon L.J."/>
            <person name="Tambunga G."/>
            <person name="Toriumi M.J."/>
            <person name="Town C.D."/>
            <person name="Utterback T."/>
            <person name="Van Aken S."/>
            <person name="Vaysberg M."/>
            <person name="Vysotskaia V.S."/>
            <person name="Walker M."/>
            <person name="Wu D."/>
            <person name="Yu G."/>
            <person name="Fraser C.M."/>
            <person name="Venter J.C."/>
            <person name="Davis R.W."/>
        </authorList>
    </citation>
    <scope>NUCLEOTIDE SEQUENCE [LARGE SCALE GENOMIC DNA]</scope>
    <source>
        <strain>cv. Columbia</strain>
    </source>
</reference>
<reference key="3">
    <citation type="journal article" date="2017" name="Plant J.">
        <title>Araport11: a complete reannotation of the Arabidopsis thaliana reference genome.</title>
        <authorList>
            <person name="Cheng C.Y."/>
            <person name="Krishnakumar V."/>
            <person name="Chan A.P."/>
            <person name="Thibaud-Nissen F."/>
            <person name="Schobel S."/>
            <person name="Town C.D."/>
        </authorList>
    </citation>
    <scope>GENOME REANNOTATION</scope>
    <source>
        <strain>cv. Columbia</strain>
    </source>
</reference>
<reference key="4">
    <citation type="journal article" date="2002" name="Science">
        <title>Functional annotation of a full-length Arabidopsis cDNA collection.</title>
        <authorList>
            <person name="Seki M."/>
            <person name="Narusaka M."/>
            <person name="Kamiya A."/>
            <person name="Ishida J."/>
            <person name="Satou M."/>
            <person name="Sakurai T."/>
            <person name="Nakajima M."/>
            <person name="Enju A."/>
            <person name="Akiyama K."/>
            <person name="Oono Y."/>
            <person name="Muramatsu M."/>
            <person name="Hayashizaki Y."/>
            <person name="Kawai J."/>
            <person name="Carninci P."/>
            <person name="Itoh M."/>
            <person name="Ishii Y."/>
            <person name="Arakawa T."/>
            <person name="Shibata K."/>
            <person name="Shinagawa A."/>
            <person name="Shinozaki K."/>
        </authorList>
    </citation>
    <scope>NUCLEOTIDE SEQUENCE [LARGE SCALE MRNA]</scope>
    <source>
        <strain>cv. Columbia</strain>
    </source>
</reference>
<reference key="5">
    <citation type="journal article" date="2003" name="Science">
        <title>Empirical analysis of transcriptional activity in the Arabidopsis genome.</title>
        <authorList>
            <person name="Yamada K."/>
            <person name="Lim J."/>
            <person name="Dale J.M."/>
            <person name="Chen H."/>
            <person name="Shinn P."/>
            <person name="Palm C.J."/>
            <person name="Southwick A.M."/>
            <person name="Wu H.C."/>
            <person name="Kim C.J."/>
            <person name="Nguyen M."/>
            <person name="Pham P.K."/>
            <person name="Cheuk R.F."/>
            <person name="Karlin-Newmann G."/>
            <person name="Liu S.X."/>
            <person name="Lam B."/>
            <person name="Sakano H."/>
            <person name="Wu T."/>
            <person name="Yu G."/>
            <person name="Miranda M."/>
            <person name="Quach H.L."/>
            <person name="Tripp M."/>
            <person name="Chang C.H."/>
            <person name="Lee J.M."/>
            <person name="Toriumi M.J."/>
            <person name="Chan M.M."/>
            <person name="Tang C.C."/>
            <person name="Onodera C.S."/>
            <person name="Deng J.M."/>
            <person name="Akiyama K."/>
            <person name="Ansari Y."/>
            <person name="Arakawa T."/>
            <person name="Banh J."/>
            <person name="Banno F."/>
            <person name="Bowser L."/>
            <person name="Brooks S.Y."/>
            <person name="Carninci P."/>
            <person name="Chao Q."/>
            <person name="Choy N."/>
            <person name="Enju A."/>
            <person name="Goldsmith A.D."/>
            <person name="Gurjal M."/>
            <person name="Hansen N.F."/>
            <person name="Hayashizaki Y."/>
            <person name="Johnson-Hopson C."/>
            <person name="Hsuan V.W."/>
            <person name="Iida K."/>
            <person name="Karnes M."/>
            <person name="Khan S."/>
            <person name="Koesema E."/>
            <person name="Ishida J."/>
            <person name="Jiang P.X."/>
            <person name="Jones T."/>
            <person name="Kawai J."/>
            <person name="Kamiya A."/>
            <person name="Meyers C."/>
            <person name="Nakajima M."/>
            <person name="Narusaka M."/>
            <person name="Seki M."/>
            <person name="Sakurai T."/>
            <person name="Satou M."/>
            <person name="Tamse R."/>
            <person name="Vaysberg M."/>
            <person name="Wallender E.K."/>
            <person name="Wong C."/>
            <person name="Yamamura Y."/>
            <person name="Yuan S."/>
            <person name="Shinozaki K."/>
            <person name="Davis R.W."/>
            <person name="Theologis A."/>
            <person name="Ecker J.R."/>
        </authorList>
    </citation>
    <scope>NUCLEOTIDE SEQUENCE [LARGE SCALE MRNA]</scope>
    <source>
        <strain>cv. Columbia</strain>
    </source>
</reference>
<reference key="6">
    <citation type="journal article" date="2006" name="Plant Physiol.">
        <title>Genome-wide analysis of the ERF gene family in Arabidopsis and rice.</title>
        <authorList>
            <person name="Nakano T."/>
            <person name="Suzuki K."/>
            <person name="Fujimura T."/>
            <person name="Shinshi H."/>
        </authorList>
    </citation>
    <scope>GENE FAMILY</scope>
    <scope>NOMENCLATURE</scope>
</reference>
<evidence type="ECO:0000250" key="1"/>
<evidence type="ECO:0000255" key="2">
    <source>
        <dbReference type="PROSITE-ProRule" id="PRU00366"/>
    </source>
</evidence>
<evidence type="ECO:0000256" key="3">
    <source>
        <dbReference type="SAM" id="MobiDB-lite"/>
    </source>
</evidence>
<evidence type="ECO:0000269" key="4">
    <source>
    </source>
</evidence>
<evidence type="ECO:0000305" key="5"/>
<dbReference type="EMBL" id="AB036884">
    <property type="protein sequence ID" value="BAB16084.1"/>
    <property type="molecule type" value="mRNA"/>
</dbReference>
<dbReference type="EMBL" id="AC008007">
    <property type="protein sequence ID" value="AAF69554.1"/>
    <property type="molecule type" value="Genomic_DNA"/>
</dbReference>
<dbReference type="EMBL" id="CP002684">
    <property type="protein sequence ID" value="AEE32902.1"/>
    <property type="molecule type" value="Genomic_DNA"/>
</dbReference>
<dbReference type="EMBL" id="AK117541">
    <property type="protein sequence ID" value="BAC42202.1"/>
    <property type="molecule type" value="mRNA"/>
</dbReference>
<dbReference type="EMBL" id="BT005401">
    <property type="protein sequence ID" value="AAO63821.1"/>
    <property type="molecule type" value="mRNA"/>
</dbReference>
<dbReference type="PIR" id="D96572">
    <property type="entry name" value="D96572"/>
</dbReference>
<dbReference type="RefSeq" id="NP_175725.1">
    <property type="nucleotide sequence ID" value="NM_104196.3"/>
</dbReference>
<dbReference type="SMR" id="Q9MAI5"/>
<dbReference type="BioGRID" id="26976">
    <property type="interactions" value="56"/>
</dbReference>
<dbReference type="FunCoup" id="Q9MAI5">
    <property type="interactions" value="26"/>
</dbReference>
<dbReference type="IntAct" id="Q9MAI5">
    <property type="interactions" value="45"/>
</dbReference>
<dbReference type="STRING" id="3702.Q9MAI5"/>
<dbReference type="iPTMnet" id="Q9MAI5"/>
<dbReference type="PaxDb" id="3702-AT1G53170.1"/>
<dbReference type="ProteomicsDB" id="220627"/>
<dbReference type="EnsemblPlants" id="AT1G53170.1">
    <property type="protein sequence ID" value="AT1G53170.1"/>
    <property type="gene ID" value="AT1G53170"/>
</dbReference>
<dbReference type="GeneID" id="841751"/>
<dbReference type="Gramene" id="AT1G53170.1">
    <property type="protein sequence ID" value="AT1G53170.1"/>
    <property type="gene ID" value="AT1G53170"/>
</dbReference>
<dbReference type="KEGG" id="ath:AT1G53170"/>
<dbReference type="Araport" id="AT1G53170"/>
<dbReference type="TAIR" id="AT1G53170">
    <property type="gene designation" value="ERF8"/>
</dbReference>
<dbReference type="eggNOG" id="ENOG502RYHH">
    <property type="taxonomic scope" value="Eukaryota"/>
</dbReference>
<dbReference type="HOGENOM" id="CLU_042594_5_1_1"/>
<dbReference type="InParanoid" id="Q9MAI5"/>
<dbReference type="OMA" id="PTHHESN"/>
<dbReference type="PhylomeDB" id="Q9MAI5"/>
<dbReference type="PRO" id="PR:Q9MAI5"/>
<dbReference type="Proteomes" id="UP000006548">
    <property type="component" value="Chromosome 1"/>
</dbReference>
<dbReference type="ExpressionAtlas" id="Q9MAI5">
    <property type="expression patterns" value="baseline and differential"/>
</dbReference>
<dbReference type="GO" id="GO:0005634">
    <property type="term" value="C:nucleus"/>
    <property type="evidence" value="ECO:0007669"/>
    <property type="project" value="UniProtKB-SubCell"/>
</dbReference>
<dbReference type="GO" id="GO:0003700">
    <property type="term" value="F:DNA-binding transcription factor activity"/>
    <property type="evidence" value="ECO:0000250"/>
    <property type="project" value="TAIR"/>
</dbReference>
<dbReference type="GO" id="GO:0000976">
    <property type="term" value="F:transcription cis-regulatory region binding"/>
    <property type="evidence" value="ECO:0000353"/>
    <property type="project" value="TAIR"/>
</dbReference>
<dbReference type="GO" id="GO:0009873">
    <property type="term" value="P:ethylene-activated signaling pathway"/>
    <property type="evidence" value="ECO:0000304"/>
    <property type="project" value="TAIR"/>
</dbReference>
<dbReference type="CDD" id="cd00018">
    <property type="entry name" value="AP2"/>
    <property type="match status" value="1"/>
</dbReference>
<dbReference type="FunFam" id="3.30.730.10:FF:000001">
    <property type="entry name" value="Ethylene-responsive transcription factor 2"/>
    <property type="match status" value="1"/>
</dbReference>
<dbReference type="Gene3D" id="3.30.730.10">
    <property type="entry name" value="AP2/ERF domain"/>
    <property type="match status" value="1"/>
</dbReference>
<dbReference type="InterPro" id="IPR001471">
    <property type="entry name" value="AP2/ERF_dom"/>
</dbReference>
<dbReference type="InterPro" id="IPR036955">
    <property type="entry name" value="AP2/ERF_dom_sf"/>
</dbReference>
<dbReference type="InterPro" id="IPR016177">
    <property type="entry name" value="DNA-bd_dom_sf"/>
</dbReference>
<dbReference type="PANTHER" id="PTHR31677">
    <property type="entry name" value="AP2 DOMAIN CLASS TRANSCRIPTION FACTOR"/>
    <property type="match status" value="1"/>
</dbReference>
<dbReference type="PANTHER" id="PTHR31677:SF251">
    <property type="entry name" value="ETHYLENE-RESPONSIVE TRANSCRIPTION FACTOR 8"/>
    <property type="match status" value="1"/>
</dbReference>
<dbReference type="Pfam" id="PF00847">
    <property type="entry name" value="AP2"/>
    <property type="match status" value="1"/>
</dbReference>
<dbReference type="PRINTS" id="PR00367">
    <property type="entry name" value="ETHRSPELEMNT"/>
</dbReference>
<dbReference type="SMART" id="SM00380">
    <property type="entry name" value="AP2"/>
    <property type="match status" value="1"/>
</dbReference>
<dbReference type="SUPFAM" id="SSF54171">
    <property type="entry name" value="DNA-binding domain"/>
    <property type="match status" value="1"/>
</dbReference>
<dbReference type="PROSITE" id="PS51032">
    <property type="entry name" value="AP2_ERF"/>
    <property type="match status" value="1"/>
</dbReference>
<organism>
    <name type="scientific">Arabidopsis thaliana</name>
    <name type="common">Mouse-ear cress</name>
    <dbReference type="NCBI Taxonomy" id="3702"/>
    <lineage>
        <taxon>Eukaryota</taxon>
        <taxon>Viridiplantae</taxon>
        <taxon>Streptophyta</taxon>
        <taxon>Embryophyta</taxon>
        <taxon>Tracheophyta</taxon>
        <taxon>Spermatophyta</taxon>
        <taxon>Magnoliopsida</taxon>
        <taxon>eudicotyledons</taxon>
        <taxon>Gunneridae</taxon>
        <taxon>Pentapetalae</taxon>
        <taxon>rosids</taxon>
        <taxon>malvids</taxon>
        <taxon>Brassicales</taxon>
        <taxon>Brassicaceae</taxon>
        <taxon>Camelineae</taxon>
        <taxon>Arabidopsis</taxon>
    </lineage>
</organism>
<name>ERF79_ARATH</name>
<keyword id="KW-0238">DNA-binding</keyword>
<keyword id="KW-0936">Ethylene signaling pathway</keyword>
<keyword id="KW-0539">Nucleus</keyword>
<keyword id="KW-1185">Reference proteome</keyword>
<keyword id="KW-0678">Repressor</keyword>
<keyword id="KW-0804">Transcription</keyword>
<keyword id="KW-0805">Transcription regulation</keyword>
<feature type="chain" id="PRO_0000112558" description="Ethylene-responsive transcription factor 8">
    <location>
        <begin position="1"/>
        <end position="185"/>
    </location>
</feature>
<feature type="DNA-binding region" description="AP2/ERF" evidence="2">
    <location>
        <begin position="30"/>
        <end position="87"/>
    </location>
</feature>
<feature type="region of interest" description="Disordered" evidence="3">
    <location>
        <begin position="1"/>
        <end position="26"/>
    </location>
</feature>
<feature type="short sequence motif" description="EAR-like (transcriptional repression)">
    <location>
        <begin position="176"/>
        <end position="182"/>
    </location>
</feature>
<accession>Q9MAI5</accession>
<comment type="function">
    <text evidence="1 4">Involved in the regulation of gene expression by stress factors and by components of stress signal transduction pathways. Transcription factor that binds to the GCC-box pathogenesis-related promoter element. Acts as a transcriptional inhibitor and may regulate other AtERFs (By similarity).</text>
</comment>
<comment type="interaction">
    <interactant intactId="EBI-2000137">
        <id>Q9MAI5</id>
    </interactant>
    <interactant intactId="EBI-25522986">
        <id>Q9FIW5</id>
        <label>ANAC094</label>
    </interactant>
    <organismsDiffer>false</organismsDiffer>
    <experiments>3</experiments>
</comment>
<comment type="interaction">
    <interactant intactId="EBI-2000137">
        <id>Q9MAI5</id>
    </interactant>
    <interactant intactId="EBI-3947588">
        <id>Q93YR9</id>
        <label>ARF16</label>
    </interactant>
    <organismsDiffer>false</organismsDiffer>
    <experiments>3</experiments>
</comment>
<comment type="interaction">
    <interactant intactId="EBI-2000137">
        <id>Q9MAI5</id>
    </interactant>
    <interactant intactId="EBI-4438678">
        <id>Q94C33</id>
        <label>At3g51180</label>
    </interactant>
    <organismsDiffer>false</organismsDiffer>
    <experiments>3</experiments>
</comment>
<comment type="interaction">
    <interactant intactId="EBI-2000137">
        <id>Q9MAI5</id>
    </interactant>
    <interactant intactId="EBI-15191535">
        <id>O80748</id>
        <label>BBX26</label>
    </interactant>
    <organismsDiffer>false</organismsDiffer>
    <experiments>3</experiments>
</comment>
<comment type="interaction">
    <interactant intactId="EBI-2000137">
        <id>Q9MAI5</id>
    </interactant>
    <interactant intactId="EBI-1153783">
        <id>Q38897</id>
        <label>BEL1</label>
    </interactant>
    <organismsDiffer>false</organismsDiffer>
    <experiments>3</experiments>
</comment>
<comment type="interaction">
    <interactant intactId="EBI-2000137">
        <id>Q9MAI5</id>
    </interactant>
    <interactant intactId="EBI-15192637">
        <id>Q9C7T4</id>
        <label>BHLH96</label>
    </interactant>
    <organismsDiffer>false</organismsDiffer>
    <experiments>3</experiments>
</comment>
<comment type="interaction">
    <interactant intactId="EBI-2000137">
        <id>Q9MAI5</id>
    </interactant>
    <interactant intactId="EBI-540891">
        <id>Q8L765</id>
        <label>BPM1</label>
    </interactant>
    <organismsDiffer>false</organismsDiffer>
    <experiments>3</experiments>
</comment>
<comment type="interaction">
    <interactant intactId="EBI-2000137">
        <id>Q9MAI5</id>
    </interactant>
    <interactant intactId="EBI-540923">
        <id>O22286</id>
        <label>BPM3</label>
    </interactant>
    <organismsDiffer>false</organismsDiffer>
    <experiments>3</experiments>
</comment>
<comment type="interaction">
    <interactant intactId="EBI-2000137">
        <id>Q9MAI5</id>
    </interactant>
    <interactant intactId="EBI-4426649">
        <id>Q17TI5</id>
        <label>BRX</label>
    </interactant>
    <organismsDiffer>false</organismsDiffer>
    <experiments>3</experiments>
</comment>
<comment type="interaction">
    <interactant intactId="EBI-2000137">
        <id>Q9MAI5</id>
    </interactant>
    <interactant intactId="EBI-15195807">
        <id>Q9SVX5</id>
        <label>DREB2F</label>
    </interactant>
    <organismsDiffer>false</organismsDiffer>
    <experiments>3</experiments>
</comment>
<comment type="interaction">
    <interactant intactId="EBI-2000137">
        <id>Q9MAI5</id>
    </interactant>
    <interactant intactId="EBI-25511859">
        <id>Q9SKT1</id>
        <label>ERF053</label>
    </interactant>
    <organismsDiffer>false</organismsDiffer>
    <experiments>3</experiments>
</comment>
<comment type="interaction">
    <interactant intactId="EBI-2000137">
        <id>Q9MAI5</id>
    </interactant>
    <interactant intactId="EBI-15202888">
        <id>Q6J9Q2</id>
        <label>ERF086</label>
    </interactant>
    <organismsDiffer>false</organismsDiffer>
    <experiments>3</experiments>
</comment>
<comment type="interaction">
    <interactant intactId="EBI-2000137">
        <id>Q9MAI5</id>
    </interactant>
    <interactant intactId="EBI-1536925">
        <id>Q9FYK5</id>
        <label>ESR2</label>
    </interactant>
    <organismsDiffer>false</organismsDiffer>
    <experiments>3</experiments>
</comment>
<comment type="interaction">
    <interactant intactId="EBI-2000137">
        <id>Q9MAI5</id>
    </interactant>
    <interactant intactId="EBI-963606">
        <id>Q9LQT8</id>
        <label>GAI</label>
    </interactant>
    <organismsDiffer>false</organismsDiffer>
    <experiments>3</experiments>
</comment>
<comment type="interaction">
    <interactant intactId="EBI-2000137">
        <id>Q9MAI5</id>
    </interactant>
    <interactant intactId="EBI-15203988">
        <id>Q9LS00</id>
        <label>HHO1</label>
    </interactant>
    <organismsDiffer>false</organismsDiffer>
    <experiments>4</experiments>
</comment>
<comment type="interaction">
    <interactant intactId="EBI-2000137">
        <id>Q9MAI5</id>
    </interactant>
    <interactant intactId="EBI-4429217">
        <id>Q8VZS3</id>
        <label>HHO2</label>
    </interactant>
    <organismsDiffer>false</organismsDiffer>
    <experiments>3</experiments>
</comment>
<comment type="interaction">
    <interactant intactId="EBI-2000137">
        <id>Q9MAI5</id>
    </interactant>
    <interactant intactId="EBI-25523506">
        <id>Q9CA30</id>
        <label>LBD42</label>
    </interactant>
    <organismsDiffer>false</organismsDiffer>
    <experiments>3</experiments>
</comment>
<comment type="interaction">
    <interactant intactId="EBI-2000137">
        <id>Q9MAI5</id>
    </interactant>
    <interactant intactId="EBI-15198743">
        <id>Q9LSI4</id>
        <label>MGH6.1</label>
    </interactant>
    <organismsDiffer>false</organismsDiffer>
    <experiments>3</experiments>
</comment>
<comment type="interaction">
    <interactant intactId="EBI-2000137">
        <id>Q9MAI5</id>
    </interactant>
    <interactant intactId="EBI-15197631">
        <id>Q9LK95</id>
        <label>MYB21</label>
    </interactant>
    <organismsDiffer>false</organismsDiffer>
    <experiments>3</experiments>
</comment>
<comment type="interaction">
    <interactant intactId="EBI-2000137">
        <id>Q9MAI5</id>
    </interactant>
    <interactant intactId="EBI-1238013">
        <id>O22179</id>
        <label>MYB70</label>
    </interactant>
    <organismsDiffer>false</organismsDiffer>
    <experiments>3</experiments>
</comment>
<comment type="interaction">
    <interactant intactId="EBI-2000137">
        <id>Q9MAI5</id>
    </interactant>
    <interactant intactId="EBI-25506855">
        <id>O23160</id>
        <label>MYB73</label>
    </interactant>
    <organismsDiffer>false</organismsDiffer>
    <experiments>5</experiments>
</comment>
<comment type="interaction">
    <interactant intactId="EBI-2000137">
        <id>Q9MAI5</id>
    </interactant>
    <interactant intactId="EBI-25523464">
        <id>Q9FK47</id>
        <label>MYR1</label>
    </interactant>
    <organismsDiffer>false</organismsDiffer>
    <experiments>3</experiments>
</comment>
<comment type="interaction">
    <interactant intactId="EBI-2000137">
        <id>Q9MAI5</id>
    </interactant>
    <interactant intactId="EBI-2475789">
        <id>Q9SFD8</id>
        <label>NFYB9</label>
    </interactant>
    <organismsDiffer>false</organismsDiffer>
    <experiments>3</experiments>
</comment>
<comment type="interaction">
    <interactant intactId="EBI-2000137">
        <id>Q9MAI5</id>
    </interactant>
    <interactant intactId="EBI-4443730">
        <id>Q8LAJ7</id>
        <label>PHL3</label>
    </interactant>
    <organismsDiffer>false</organismsDiffer>
    <experiments>3</experiments>
</comment>
<comment type="interaction">
    <interactant intactId="EBI-2000137">
        <id>Q9MAI5</id>
    </interactant>
    <interactant intactId="EBI-1645478">
        <id>Q38845</id>
        <label>PP2AA1</label>
    </interactant>
    <organismsDiffer>false</organismsDiffer>
    <experiments>3</experiments>
</comment>
<comment type="interaction">
    <interactant intactId="EBI-2000137">
        <id>Q9MAI5</id>
    </interactant>
    <interactant intactId="EBI-4425094">
        <id>O82239</id>
        <label>RFI2</label>
    </interactant>
    <organismsDiffer>false</organismsDiffer>
    <experiments>3</experiments>
</comment>
<comment type="interaction">
    <interactant intactId="EBI-2000137">
        <id>Q9MAI5</id>
    </interactant>
    <interactant intactId="EBI-4424877">
        <id>Q9S7W5</id>
        <label>TCP13</label>
    </interactant>
    <organismsDiffer>false</organismsDiffer>
    <experiments>5</experiments>
</comment>
<comment type="interaction">
    <interactant intactId="EBI-2000137">
        <id>Q9MAI5</id>
    </interactant>
    <interactant intactId="EBI-4426144">
        <id>Q9C9L2</id>
        <label>TCP15</label>
    </interactant>
    <organismsDiffer>false</organismsDiffer>
    <experiments>3</experiments>
</comment>
<comment type="interaction">
    <interactant intactId="EBI-2000137">
        <id>Q9MAI5</id>
    </interactant>
    <interactant intactId="EBI-15198627">
        <id>Q9M1U4</id>
        <label>TCP16</label>
    </interactant>
    <organismsDiffer>false</organismsDiffer>
    <experiments>3</experiments>
</comment>
<comment type="interaction">
    <interactant intactId="EBI-2000137">
        <id>Q9MAI5</id>
    </interactant>
    <interactant intactId="EBI-4426168">
        <id>Q9FTA2</id>
        <label>TCP21</label>
    </interactant>
    <organismsDiffer>false</organismsDiffer>
    <experiments>3</experiments>
</comment>
<comment type="interaction">
    <interactant intactId="EBI-2000137">
        <id>Q9MAI5</id>
    </interactant>
    <interactant intactId="EBI-15192297">
        <id>Q9LQF0</id>
        <label>TCP23</label>
    </interactant>
    <organismsDiffer>false</organismsDiffer>
    <experiments>4</experiments>
</comment>
<comment type="interaction">
    <interactant intactId="EBI-2000137">
        <id>Q9MAI5</id>
    </interactant>
    <interactant intactId="EBI-25522447">
        <id>Q9MAH8</id>
        <label>TCP3</label>
    </interactant>
    <organismsDiffer>false</organismsDiffer>
    <experiments>3</experiments>
</comment>
<comment type="interaction">
    <interactant intactId="EBI-2000137">
        <id>Q9MAI5</id>
    </interactant>
    <interactant intactId="EBI-4424568">
        <id>Q9LVG2</id>
        <label>TOE2</label>
    </interactant>
    <organismsDiffer>false</organismsDiffer>
    <experiments>3</experiments>
</comment>
<comment type="interaction">
    <interactant intactId="EBI-2000137">
        <id>Q9MAI5</id>
    </interactant>
    <interactant intactId="EBI-15193683">
        <id>Q5CCK4</id>
        <label>VAL2</label>
    </interactant>
    <organismsDiffer>false</organismsDiffer>
    <experiments>3</experiments>
</comment>
<comment type="interaction">
    <interactant intactId="EBI-2000137">
        <id>Q9MAI5</id>
    </interactant>
    <interactant intactId="EBI-1113627">
        <id>O22152</id>
        <label>YAB1</label>
    </interactant>
    <organismsDiffer>false</organismsDiffer>
    <experiments>3</experiments>
</comment>
<comment type="interaction">
    <interactant intactId="EBI-2000137">
        <id>Q9MAI5</id>
    </interactant>
    <interactant intactId="EBI-1115523">
        <id>Q9LDT3</id>
        <label>YAB4</label>
    </interactant>
    <organismsDiffer>false</organismsDiffer>
    <experiments>3</experiments>
</comment>
<comment type="interaction">
    <interactant intactId="EBI-2000137">
        <id>Q9MAI5</id>
    </interactant>
    <interactant intactId="EBI-1806244">
        <id>O64722</id>
        <label>ZHD3</label>
    </interactant>
    <organismsDiffer>false</organismsDiffer>
    <experiments>3</experiments>
</comment>
<comment type="subcellular location">
    <subcellularLocation>
        <location evidence="5">Nucleus</location>
    </subcellularLocation>
</comment>
<comment type="domain">
    <text evidence="1">Contains a slightly degenerated ERF-associated amphiphilic repression (EAR) motif, which may be involved in the activity of transcriptional repression.</text>
</comment>
<comment type="similarity">
    <text evidence="5">Belongs to the AP2/ERF transcription factor family. ERF subfamily.</text>
</comment>
<gene>
    <name type="primary">ERF8</name>
    <name type="synonym">ERF-8</name>
    <name type="synonym">ERF079</name>
    <name type="ordered locus">At1g53170</name>
    <name type="ORF">F12M16.6</name>
</gene>